<sequence>MSKPNTETISVNIPESEGVPLPDEQSVAERSIVNQSPNNSTVVTVNSEGDVSKIITRIKNHLASFNYAASLDFNKDKDHDKVLTVGEYKISRECLLHYLSGNPDFLKSSAGECSKAIQTFSNESGNLDLESLLTLSPNKDFIHDTNFYKNLYGFNVSIADFIANNNEFKKANYNTQIRILQNYHEFLKQSIEYFNKYMNQYKVIDDNLISRSYNLMYLLNVLTFRRANVGRNINELLDSYNKLNQAIATNLAIYDSINKSKLEIAPEARSSIIDKGVQDLVNSLKQRTNILKKQGETLKKNVEDINKDTSNLKRHATGDIIGIADSLRKEVDSVATSFVSTEKKK</sequence>
<name>YR253_MIMIV</name>
<comment type="subcellular location">
    <subcellularLocation>
        <location evidence="3">Virion</location>
    </subcellularLocation>
</comment>
<accession>Q5UPU1</accession>
<reference key="1">
    <citation type="journal article" date="2004" name="Science">
        <title>The 1.2-megabase genome sequence of Mimivirus.</title>
        <authorList>
            <person name="Raoult D."/>
            <person name="Audic S."/>
            <person name="Robert C."/>
            <person name="Abergel C."/>
            <person name="Renesto P."/>
            <person name="Ogata H."/>
            <person name="La Scola B."/>
            <person name="Susan M."/>
            <person name="Claverie J.-M."/>
        </authorList>
    </citation>
    <scope>NUCLEOTIDE SEQUENCE [LARGE SCALE GENOMIC DNA]</scope>
    <source>
        <strain>Rowbotham-Bradford</strain>
    </source>
</reference>
<reference key="2">
    <citation type="journal article" date="2006" name="J. Virol.">
        <title>Mimivirus giant particles incorporate a large fraction of anonymous and unique gene products.</title>
        <authorList>
            <person name="Renesto P."/>
            <person name="Abergel C."/>
            <person name="Decloquement P."/>
            <person name="Moinier D."/>
            <person name="Azza S."/>
            <person name="Ogata H."/>
            <person name="Fourquet P."/>
            <person name="Gorvel J.-P."/>
            <person name="Claverie J.-M."/>
            <person name="Raoult D."/>
        </authorList>
    </citation>
    <scope>IDENTIFICATION BY MASS SPECTROMETRY [LARGE SCALE ANALYSIS]</scope>
    <scope>SUBCELLULAR LOCATION</scope>
</reference>
<keyword id="KW-0175">Coiled coil</keyword>
<keyword id="KW-1185">Reference proteome</keyword>
<keyword id="KW-0946">Virion</keyword>
<proteinExistence type="evidence at protein level"/>
<feature type="chain" id="PRO_0000253265" description="Uncharacterized protein R253">
    <location>
        <begin position="1"/>
        <end position="345"/>
    </location>
</feature>
<feature type="region of interest" description="Disordered" evidence="2">
    <location>
        <begin position="1"/>
        <end position="23"/>
    </location>
</feature>
<feature type="coiled-coil region" evidence="1">
    <location>
        <begin position="283"/>
        <end position="316"/>
    </location>
</feature>
<feature type="compositionally biased region" description="Polar residues" evidence="2">
    <location>
        <begin position="1"/>
        <end position="13"/>
    </location>
</feature>
<dbReference type="EMBL" id="AY653733">
    <property type="protein sequence ID" value="AAV50525.1"/>
    <property type="molecule type" value="Genomic_DNA"/>
</dbReference>
<dbReference type="SMR" id="Q5UPU1"/>
<dbReference type="KEGG" id="vg:9924861"/>
<dbReference type="OrthoDB" id="10341at10239"/>
<dbReference type="Proteomes" id="UP000001134">
    <property type="component" value="Genome"/>
</dbReference>
<dbReference type="GO" id="GO:0044423">
    <property type="term" value="C:virion component"/>
    <property type="evidence" value="ECO:0007669"/>
    <property type="project" value="UniProtKB-KW"/>
</dbReference>
<gene>
    <name type="ordered locus">MIMI_R253</name>
</gene>
<protein>
    <recommendedName>
        <fullName>Uncharacterized protein R253</fullName>
    </recommendedName>
</protein>
<evidence type="ECO:0000255" key="1"/>
<evidence type="ECO:0000256" key="2">
    <source>
        <dbReference type="SAM" id="MobiDB-lite"/>
    </source>
</evidence>
<evidence type="ECO:0000269" key="3">
    <source>
    </source>
</evidence>
<organism>
    <name type="scientific">Acanthamoeba polyphaga mimivirus</name>
    <name type="common">APMV</name>
    <dbReference type="NCBI Taxonomy" id="212035"/>
    <lineage>
        <taxon>Viruses</taxon>
        <taxon>Varidnaviria</taxon>
        <taxon>Bamfordvirae</taxon>
        <taxon>Nucleocytoviricota</taxon>
        <taxon>Megaviricetes</taxon>
        <taxon>Imitervirales</taxon>
        <taxon>Mimiviridae</taxon>
        <taxon>Megamimivirinae</taxon>
        <taxon>Mimivirus</taxon>
        <taxon>Mimivirus bradfordmassiliense</taxon>
    </lineage>
</organism>
<organismHost>
    <name type="scientific">Acanthamoeba polyphaga</name>
    <name type="common">Amoeba</name>
    <dbReference type="NCBI Taxonomy" id="5757"/>
</organismHost>